<proteinExistence type="inferred from homology"/>
<reference key="1">
    <citation type="journal article" date="2004" name="J. Gen. Virol.">
        <title>Genetic content of wild-type human cytomegalovirus.</title>
        <authorList>
            <person name="Dolan A."/>
            <person name="Cunningham C."/>
            <person name="Hector R.D."/>
            <person name="Hassan-Walker A.F."/>
            <person name="Lee L."/>
            <person name="Addison C."/>
            <person name="Dargan D.J."/>
            <person name="McGeoch D.J."/>
            <person name="Gatherer D."/>
            <person name="Emery V.C."/>
            <person name="Griffiths P.D."/>
            <person name="Sinzger C."/>
            <person name="McSharry B.P."/>
            <person name="Wilkinson G.W.G."/>
            <person name="Davison A.J."/>
        </authorList>
    </citation>
    <scope>NUCLEOTIDE SEQUENCE [LARGE SCALE GENOMIC DNA]</scope>
</reference>
<sequence>MKRMIRSHGRKTECQMTGAGERRGSAVGALICGSGTRRGSGANERRDSDVGPIAHSSGTRRGSANETSACTRTDHQKADIGLWFMFLVFGLCSWLAMRYRAQ</sequence>
<comment type="subcellular location">
    <subcellularLocation>
        <location evidence="3">Host membrane</location>
        <topology evidence="3">Single-pass membrane protein</topology>
    </subcellularLocation>
</comment>
<comment type="similarity">
    <text evidence="3">Belongs to the HHV-5 UL15A protein family.</text>
</comment>
<gene>
    <name type="primary">UL15A</name>
</gene>
<name>UL15A_HCMVM</name>
<protein>
    <recommendedName>
        <fullName>Uncharacterized protein UL15A</fullName>
    </recommendedName>
</protein>
<dbReference type="EMBL" id="AY446894">
    <property type="protein sequence ID" value="AAR31580.1"/>
    <property type="molecule type" value="Genomic_DNA"/>
</dbReference>
<dbReference type="RefSeq" id="YP_081474.1">
    <property type="nucleotide sequence ID" value="NC_006273.2"/>
</dbReference>
<dbReference type="SMR" id="F5HAE6"/>
<dbReference type="GlyCosmos" id="F5HAE6">
    <property type="glycosylation" value="1 site, No reported glycans"/>
</dbReference>
<dbReference type="DNASU" id="3077423"/>
<dbReference type="GeneID" id="3077423"/>
<dbReference type="KEGG" id="vg:3077423"/>
<dbReference type="Reactome" id="R-HSA-9610379">
    <property type="pathway name" value="HCMV Late Events"/>
</dbReference>
<dbReference type="Proteomes" id="UP000000938">
    <property type="component" value="Segment"/>
</dbReference>
<dbReference type="GO" id="GO:0033644">
    <property type="term" value="C:host cell membrane"/>
    <property type="evidence" value="ECO:0007669"/>
    <property type="project" value="UniProtKB-SubCell"/>
</dbReference>
<dbReference type="GO" id="GO:0016020">
    <property type="term" value="C:membrane"/>
    <property type="evidence" value="ECO:0007669"/>
    <property type="project" value="UniProtKB-KW"/>
</dbReference>
<organism>
    <name type="scientific">Human cytomegalovirus (strain Merlin)</name>
    <name type="common">HHV-5</name>
    <name type="synonym">Human herpesvirus 5</name>
    <dbReference type="NCBI Taxonomy" id="295027"/>
    <lineage>
        <taxon>Viruses</taxon>
        <taxon>Duplodnaviria</taxon>
        <taxon>Heunggongvirae</taxon>
        <taxon>Peploviricota</taxon>
        <taxon>Herviviricetes</taxon>
        <taxon>Herpesvirales</taxon>
        <taxon>Orthoherpesviridae</taxon>
        <taxon>Betaherpesvirinae</taxon>
        <taxon>Cytomegalovirus</taxon>
        <taxon>Cytomegalovirus humanbeta5</taxon>
        <taxon>Human cytomegalovirus</taxon>
    </lineage>
</organism>
<keyword id="KW-0325">Glycoprotein</keyword>
<keyword id="KW-1043">Host membrane</keyword>
<keyword id="KW-0472">Membrane</keyword>
<keyword id="KW-1185">Reference proteome</keyword>
<keyword id="KW-0812">Transmembrane</keyword>
<keyword id="KW-1133">Transmembrane helix</keyword>
<feature type="chain" id="PRO_0000418244" description="Uncharacterized protein UL15A">
    <location>
        <begin position="1"/>
        <end position="102"/>
    </location>
</feature>
<feature type="topological domain" description="Extracellular" evidence="1">
    <location>
        <begin position="1"/>
        <end position="79"/>
    </location>
</feature>
<feature type="transmembrane region" description="Helical" evidence="1">
    <location>
        <begin position="80"/>
        <end position="97"/>
    </location>
</feature>
<feature type="topological domain" description="Cytoplasmic" evidence="1">
    <location>
        <begin position="98"/>
        <end position="102"/>
    </location>
</feature>
<feature type="region of interest" description="Disordered" evidence="2">
    <location>
        <begin position="1"/>
        <end position="21"/>
    </location>
</feature>
<feature type="region of interest" description="Disordered" evidence="2">
    <location>
        <begin position="33"/>
        <end position="71"/>
    </location>
</feature>
<feature type="compositionally biased region" description="Polar residues" evidence="2">
    <location>
        <begin position="56"/>
        <end position="71"/>
    </location>
</feature>
<feature type="glycosylation site" description="N-linked (GlcNAc...) asparagine; by host" evidence="1">
    <location>
        <position position="65"/>
    </location>
</feature>
<evidence type="ECO:0000255" key="1"/>
<evidence type="ECO:0000256" key="2">
    <source>
        <dbReference type="SAM" id="MobiDB-lite"/>
    </source>
</evidence>
<evidence type="ECO:0000305" key="3"/>
<accession>F5HAE6</accession>
<organismHost>
    <name type="scientific">Homo sapiens</name>
    <name type="common">Human</name>
    <dbReference type="NCBI Taxonomy" id="9606"/>
</organismHost>